<dbReference type="EC" id="7.4.2.8" evidence="1"/>
<dbReference type="EMBL" id="CP001186">
    <property type="protein sequence ID" value="ACK97560.1"/>
    <property type="molecule type" value="Genomic_DNA"/>
</dbReference>
<dbReference type="RefSeq" id="WP_000579374.1">
    <property type="nucleotide sequence ID" value="NC_011772.1"/>
</dbReference>
<dbReference type="SMR" id="B7IPV1"/>
<dbReference type="KEGG" id="bcg:BCG9842_B5650"/>
<dbReference type="HOGENOM" id="CLU_005314_3_0_9"/>
<dbReference type="Proteomes" id="UP000006744">
    <property type="component" value="Chromosome"/>
</dbReference>
<dbReference type="GO" id="GO:0031522">
    <property type="term" value="C:cell envelope Sec protein transport complex"/>
    <property type="evidence" value="ECO:0007669"/>
    <property type="project" value="TreeGrafter"/>
</dbReference>
<dbReference type="GO" id="GO:0005829">
    <property type="term" value="C:cytosol"/>
    <property type="evidence" value="ECO:0007669"/>
    <property type="project" value="TreeGrafter"/>
</dbReference>
<dbReference type="GO" id="GO:0005886">
    <property type="term" value="C:plasma membrane"/>
    <property type="evidence" value="ECO:0007669"/>
    <property type="project" value="UniProtKB-SubCell"/>
</dbReference>
<dbReference type="GO" id="GO:0005524">
    <property type="term" value="F:ATP binding"/>
    <property type="evidence" value="ECO:0007669"/>
    <property type="project" value="UniProtKB-UniRule"/>
</dbReference>
<dbReference type="GO" id="GO:0046872">
    <property type="term" value="F:metal ion binding"/>
    <property type="evidence" value="ECO:0007669"/>
    <property type="project" value="UniProtKB-KW"/>
</dbReference>
<dbReference type="GO" id="GO:0008564">
    <property type="term" value="F:protein-exporting ATPase activity"/>
    <property type="evidence" value="ECO:0007669"/>
    <property type="project" value="UniProtKB-EC"/>
</dbReference>
<dbReference type="GO" id="GO:0065002">
    <property type="term" value="P:intracellular protein transmembrane transport"/>
    <property type="evidence" value="ECO:0007669"/>
    <property type="project" value="UniProtKB-UniRule"/>
</dbReference>
<dbReference type="GO" id="GO:0017038">
    <property type="term" value="P:protein import"/>
    <property type="evidence" value="ECO:0007669"/>
    <property type="project" value="InterPro"/>
</dbReference>
<dbReference type="GO" id="GO:0006605">
    <property type="term" value="P:protein targeting"/>
    <property type="evidence" value="ECO:0007669"/>
    <property type="project" value="UniProtKB-UniRule"/>
</dbReference>
<dbReference type="GO" id="GO:0043952">
    <property type="term" value="P:protein transport by the Sec complex"/>
    <property type="evidence" value="ECO:0007669"/>
    <property type="project" value="TreeGrafter"/>
</dbReference>
<dbReference type="CDD" id="cd17928">
    <property type="entry name" value="DEXDc_SecA"/>
    <property type="match status" value="1"/>
</dbReference>
<dbReference type="CDD" id="cd18803">
    <property type="entry name" value="SF2_C_secA"/>
    <property type="match status" value="1"/>
</dbReference>
<dbReference type="FunFam" id="1.10.3060.10:FF:000002">
    <property type="entry name" value="Preprotein translocase subunit SecA"/>
    <property type="match status" value="1"/>
</dbReference>
<dbReference type="FunFam" id="3.40.50.300:FF:000081">
    <property type="entry name" value="Preprotein translocase subunit SecA"/>
    <property type="match status" value="1"/>
</dbReference>
<dbReference type="FunFam" id="3.40.50.300:FF:000429">
    <property type="entry name" value="Preprotein translocase subunit SecA"/>
    <property type="match status" value="1"/>
</dbReference>
<dbReference type="FunFam" id="3.90.1440.10:FF:000001">
    <property type="entry name" value="Preprotein translocase subunit SecA"/>
    <property type="match status" value="1"/>
</dbReference>
<dbReference type="Gene3D" id="1.10.3060.10">
    <property type="entry name" value="Helical scaffold and wing domains of SecA"/>
    <property type="match status" value="1"/>
</dbReference>
<dbReference type="Gene3D" id="3.40.50.300">
    <property type="entry name" value="P-loop containing nucleotide triphosphate hydrolases"/>
    <property type="match status" value="3"/>
</dbReference>
<dbReference type="Gene3D" id="3.90.1440.10">
    <property type="entry name" value="SecA, preprotein cross-linking domain"/>
    <property type="match status" value="1"/>
</dbReference>
<dbReference type="HAMAP" id="MF_01382">
    <property type="entry name" value="SecA"/>
    <property type="match status" value="1"/>
</dbReference>
<dbReference type="InterPro" id="IPR014001">
    <property type="entry name" value="Helicase_ATP-bd"/>
</dbReference>
<dbReference type="InterPro" id="IPR001650">
    <property type="entry name" value="Helicase_C-like"/>
</dbReference>
<dbReference type="InterPro" id="IPR027417">
    <property type="entry name" value="P-loop_NTPase"/>
</dbReference>
<dbReference type="InterPro" id="IPR004027">
    <property type="entry name" value="SEC_C_motif"/>
</dbReference>
<dbReference type="InterPro" id="IPR000185">
    <property type="entry name" value="SecA"/>
</dbReference>
<dbReference type="InterPro" id="IPR020937">
    <property type="entry name" value="SecA_CS"/>
</dbReference>
<dbReference type="InterPro" id="IPR011115">
    <property type="entry name" value="SecA_DEAD"/>
</dbReference>
<dbReference type="InterPro" id="IPR014018">
    <property type="entry name" value="SecA_motor_DEAD"/>
</dbReference>
<dbReference type="InterPro" id="IPR011130">
    <property type="entry name" value="SecA_preprotein_X-link_dom"/>
</dbReference>
<dbReference type="InterPro" id="IPR044722">
    <property type="entry name" value="SecA_SF2_C"/>
</dbReference>
<dbReference type="InterPro" id="IPR011116">
    <property type="entry name" value="SecA_Wing/Scaffold"/>
</dbReference>
<dbReference type="InterPro" id="IPR036266">
    <property type="entry name" value="SecA_Wing/Scaffold_sf"/>
</dbReference>
<dbReference type="InterPro" id="IPR036670">
    <property type="entry name" value="SecA_X-link_sf"/>
</dbReference>
<dbReference type="NCBIfam" id="NF006630">
    <property type="entry name" value="PRK09200.1"/>
    <property type="match status" value="1"/>
</dbReference>
<dbReference type="NCBIfam" id="NF009538">
    <property type="entry name" value="PRK12904.1"/>
    <property type="match status" value="1"/>
</dbReference>
<dbReference type="NCBIfam" id="TIGR00963">
    <property type="entry name" value="secA"/>
    <property type="match status" value="1"/>
</dbReference>
<dbReference type="PANTHER" id="PTHR30612:SF0">
    <property type="entry name" value="CHLOROPLAST PROTEIN-TRANSPORTING ATPASE"/>
    <property type="match status" value="1"/>
</dbReference>
<dbReference type="PANTHER" id="PTHR30612">
    <property type="entry name" value="SECA INNER MEMBRANE COMPONENT OF SEC PROTEIN SECRETION SYSTEM"/>
    <property type="match status" value="1"/>
</dbReference>
<dbReference type="Pfam" id="PF21090">
    <property type="entry name" value="P-loop_SecA"/>
    <property type="match status" value="2"/>
</dbReference>
<dbReference type="Pfam" id="PF02810">
    <property type="entry name" value="SEC-C"/>
    <property type="match status" value="1"/>
</dbReference>
<dbReference type="Pfam" id="PF07517">
    <property type="entry name" value="SecA_DEAD"/>
    <property type="match status" value="1"/>
</dbReference>
<dbReference type="Pfam" id="PF01043">
    <property type="entry name" value="SecA_PP_bind"/>
    <property type="match status" value="1"/>
</dbReference>
<dbReference type="Pfam" id="PF07516">
    <property type="entry name" value="SecA_SW"/>
    <property type="match status" value="1"/>
</dbReference>
<dbReference type="PRINTS" id="PR00906">
    <property type="entry name" value="SECA"/>
</dbReference>
<dbReference type="SMART" id="SM00957">
    <property type="entry name" value="SecA_DEAD"/>
    <property type="match status" value="1"/>
</dbReference>
<dbReference type="SMART" id="SM00958">
    <property type="entry name" value="SecA_PP_bind"/>
    <property type="match status" value="1"/>
</dbReference>
<dbReference type="SUPFAM" id="SSF81886">
    <property type="entry name" value="Helical scaffold and wing domains of SecA"/>
    <property type="match status" value="1"/>
</dbReference>
<dbReference type="SUPFAM" id="SSF52540">
    <property type="entry name" value="P-loop containing nucleoside triphosphate hydrolases"/>
    <property type="match status" value="2"/>
</dbReference>
<dbReference type="SUPFAM" id="SSF81767">
    <property type="entry name" value="Pre-protein crosslinking domain of SecA"/>
    <property type="match status" value="1"/>
</dbReference>
<dbReference type="PROSITE" id="PS01312">
    <property type="entry name" value="SECA"/>
    <property type="match status" value="1"/>
</dbReference>
<dbReference type="PROSITE" id="PS51196">
    <property type="entry name" value="SECA_MOTOR_DEAD"/>
    <property type="match status" value="1"/>
</dbReference>
<sequence>MIGILKKVFDVNQRQIKRMQKTVEQIDALESSIKPLTDEQLKGKTLEFKERLTKGETVDDLLPEAFAVVREAATRVLGMRPYGVQLMGGIALHEGNISEMKTGEGKTLTSTLPVYLNALTGKGVHVVTVNEYLAQRDANEMGQLHEFLGLTVGINLNSMSREEKQEAYAADITYSTNNELGFDYLRDNMVLYKEQCVQRPLHFAIIDEVDSILVDEARTPLIISGQAQKSTELYMFANAFVRTLENEKEYSFDVKTKNVMLTEDGITKAEKAFHIENLFDLKHVALLHHINQGLRAHVVMHRDTDYVVQEGEIVIVDQFTGRLMKGRRYSEGLHQAIEAKEGVEIQNESMTLATITFQNYFRMYEKLSGMTGTAKTEEEEFRNIYNMNVIVIPTNKPIIRDDRADLIFKSMEGKFNAVVEDIVNRHKQGQPVLVGTVAIETSELISKMLTRKGVRHNILNAKNHAREADIIAEAGMKGAVTIATNMAGRGTDIKLGDDVKIFGLAVIGTERHESRRIDNQLRGRAGRQGDPGVTQFYLSMEDELMRRFGSDNMKAMMDRLGMDDSQPIESKMVSRAVESAQKRVEGNNYDARKQLLQYDDVLRQQREVIYKQRQEVMESENLRGIIEGMMKSTVERAVALHTQEEIEEDWNIKGLVDYLNTNLLQEGDVKEEELRRLAPEEMSEPIIAKLIERYNDKEKLMPEEQMREFEKVVVFRVVDTKWTEHIDAMDHLREGIHLRAYGQIDPLREYQMEGFAMFESMVASIEEEISRYIMKAEIEQNLERQEVVQGEAVHPSSDGEEAKKKPVVKGDQVGRNDLCKCGSGKKYKNCCGIVQ</sequence>
<protein>
    <recommendedName>
        <fullName evidence="1">Protein translocase subunit SecA</fullName>
        <ecNumber evidence="1">7.4.2.8</ecNumber>
    </recommendedName>
</protein>
<evidence type="ECO:0000255" key="1">
    <source>
        <dbReference type="HAMAP-Rule" id="MF_01382"/>
    </source>
</evidence>
<evidence type="ECO:0000256" key="2">
    <source>
        <dbReference type="SAM" id="MobiDB-lite"/>
    </source>
</evidence>
<accession>B7IPV1</accession>
<name>SECA_BACC2</name>
<feature type="chain" id="PRO_1000144974" description="Protein translocase subunit SecA">
    <location>
        <begin position="1"/>
        <end position="835"/>
    </location>
</feature>
<feature type="region of interest" description="Disordered" evidence="2">
    <location>
        <begin position="788"/>
        <end position="807"/>
    </location>
</feature>
<feature type="binding site" evidence="1">
    <location>
        <position position="85"/>
    </location>
    <ligand>
        <name>ATP</name>
        <dbReference type="ChEBI" id="CHEBI:30616"/>
    </ligand>
</feature>
<feature type="binding site" evidence="1">
    <location>
        <begin position="103"/>
        <end position="107"/>
    </location>
    <ligand>
        <name>ATP</name>
        <dbReference type="ChEBI" id="CHEBI:30616"/>
    </ligand>
</feature>
<feature type="binding site" evidence="1">
    <location>
        <position position="492"/>
    </location>
    <ligand>
        <name>ATP</name>
        <dbReference type="ChEBI" id="CHEBI:30616"/>
    </ligand>
</feature>
<feature type="binding site" evidence="1">
    <location>
        <position position="819"/>
    </location>
    <ligand>
        <name>Zn(2+)</name>
        <dbReference type="ChEBI" id="CHEBI:29105"/>
    </ligand>
</feature>
<feature type="binding site" evidence="1">
    <location>
        <position position="821"/>
    </location>
    <ligand>
        <name>Zn(2+)</name>
        <dbReference type="ChEBI" id="CHEBI:29105"/>
    </ligand>
</feature>
<feature type="binding site" evidence="1">
    <location>
        <position position="830"/>
    </location>
    <ligand>
        <name>Zn(2+)</name>
        <dbReference type="ChEBI" id="CHEBI:29105"/>
    </ligand>
</feature>
<feature type="binding site" evidence="1">
    <location>
        <position position="831"/>
    </location>
    <ligand>
        <name>Zn(2+)</name>
        <dbReference type="ChEBI" id="CHEBI:29105"/>
    </ligand>
</feature>
<comment type="function">
    <text evidence="1">Part of the Sec protein translocase complex. Interacts with the SecYEG preprotein conducting channel. Has a central role in coupling the hydrolysis of ATP to the transfer of proteins into and across the cell membrane, serving as an ATP-driven molecular motor driving the stepwise translocation of polypeptide chains across the membrane.</text>
</comment>
<comment type="catalytic activity">
    <reaction evidence="1">
        <text>ATP + H2O + cellular proteinSide 1 = ADP + phosphate + cellular proteinSide 2.</text>
        <dbReference type="EC" id="7.4.2.8"/>
    </reaction>
</comment>
<comment type="cofactor">
    <cofactor evidence="1">
        <name>Zn(2+)</name>
        <dbReference type="ChEBI" id="CHEBI:29105"/>
    </cofactor>
    <text evidence="1">May bind 1 zinc ion per subunit.</text>
</comment>
<comment type="subunit">
    <text evidence="1">Monomer and homodimer. Part of the essential Sec protein translocation apparatus which comprises SecA, SecYEG and auxiliary proteins SecDF. Other proteins may also be involved.</text>
</comment>
<comment type="subcellular location">
    <subcellularLocation>
        <location evidence="1">Cell membrane</location>
        <topology evidence="1">Peripheral membrane protein</topology>
        <orientation evidence="1">Cytoplasmic side</orientation>
    </subcellularLocation>
    <subcellularLocation>
        <location evidence="1">Cytoplasm</location>
    </subcellularLocation>
    <text evidence="1">Distribution is 50-50.</text>
</comment>
<comment type="similarity">
    <text evidence="1">Belongs to the SecA family.</text>
</comment>
<organism>
    <name type="scientific">Bacillus cereus (strain G9842)</name>
    <dbReference type="NCBI Taxonomy" id="405531"/>
    <lineage>
        <taxon>Bacteria</taxon>
        <taxon>Bacillati</taxon>
        <taxon>Bacillota</taxon>
        <taxon>Bacilli</taxon>
        <taxon>Bacillales</taxon>
        <taxon>Bacillaceae</taxon>
        <taxon>Bacillus</taxon>
        <taxon>Bacillus cereus group</taxon>
    </lineage>
</organism>
<keyword id="KW-0067">ATP-binding</keyword>
<keyword id="KW-1003">Cell membrane</keyword>
<keyword id="KW-0963">Cytoplasm</keyword>
<keyword id="KW-0472">Membrane</keyword>
<keyword id="KW-0479">Metal-binding</keyword>
<keyword id="KW-0547">Nucleotide-binding</keyword>
<keyword id="KW-0653">Protein transport</keyword>
<keyword id="KW-1278">Translocase</keyword>
<keyword id="KW-0811">Translocation</keyword>
<keyword id="KW-0813">Transport</keyword>
<keyword id="KW-0862">Zinc</keyword>
<gene>
    <name evidence="1" type="primary">secA</name>
    <name type="ordered locus">BCG9842_B5650</name>
</gene>
<proteinExistence type="inferred from homology"/>
<reference key="1">
    <citation type="submission" date="2008-10" db="EMBL/GenBank/DDBJ databases">
        <title>Genome sequence of Bacillus cereus G9842.</title>
        <authorList>
            <person name="Dodson R.J."/>
            <person name="Durkin A.S."/>
            <person name="Rosovitz M.J."/>
            <person name="Rasko D.A."/>
            <person name="Hoffmaster A."/>
            <person name="Ravel J."/>
            <person name="Sutton G."/>
        </authorList>
    </citation>
    <scope>NUCLEOTIDE SEQUENCE [LARGE SCALE GENOMIC DNA]</scope>
    <source>
        <strain>G9842</strain>
    </source>
</reference>